<gene>
    <name evidence="1" type="primary">pyrB</name>
    <name type="ordered locus">Mhun_0618</name>
</gene>
<name>PYRB_METHJ</name>
<protein>
    <recommendedName>
        <fullName evidence="1">Aspartate carbamoyltransferase catalytic subunit</fullName>
        <ecNumber evidence="1">2.1.3.2</ecNumber>
    </recommendedName>
    <alternativeName>
        <fullName evidence="1">Aspartate transcarbamylase</fullName>
        <shortName evidence="1">ATCase</shortName>
    </alternativeName>
</protein>
<organism>
    <name type="scientific">Methanospirillum hungatei JF-1 (strain ATCC 27890 / DSM 864 / NBRC 100397 / JF-1)</name>
    <dbReference type="NCBI Taxonomy" id="323259"/>
    <lineage>
        <taxon>Archaea</taxon>
        <taxon>Methanobacteriati</taxon>
        <taxon>Methanobacteriota</taxon>
        <taxon>Stenosarchaea group</taxon>
        <taxon>Methanomicrobia</taxon>
        <taxon>Methanomicrobiales</taxon>
        <taxon>Methanospirillaceae</taxon>
        <taxon>Methanospirillum</taxon>
    </lineage>
</organism>
<accession>Q2FN12</accession>
<sequence>MNHIISIHDLDRDQIDRLLARAGEVTAEFAGKEPLKGKILGLLFFEPSTRTRMSFESAMLRLGGSCMNLGGVEVSSMAKGETLADTIRVVSGYADAIVLRHPKVGAARLASEFSEIPILNGGDGAGQHPSQTLIDLYTIRQSMSLDNIHIGLIGDLMYGRTTHSLAYALTHYNARIHTIAPKGLGLPDSIHDNLEERGATVIEHDSIEEVISDLDVLYVTRLQRERFPDPAKFYDVSSSYRITPSLLTDVKEHLAILHPLPRVDEIDPSVDNLPYARYFEQARNGVPVRMAMLTEVMV</sequence>
<evidence type="ECO:0000255" key="1">
    <source>
        <dbReference type="HAMAP-Rule" id="MF_00001"/>
    </source>
</evidence>
<comment type="function">
    <text evidence="1">Catalyzes the condensation of carbamoyl phosphate and aspartate to form carbamoyl aspartate and inorganic phosphate, the committed step in the de novo pyrimidine nucleotide biosynthesis pathway.</text>
</comment>
<comment type="catalytic activity">
    <reaction evidence="1">
        <text>carbamoyl phosphate + L-aspartate = N-carbamoyl-L-aspartate + phosphate + H(+)</text>
        <dbReference type="Rhea" id="RHEA:20013"/>
        <dbReference type="ChEBI" id="CHEBI:15378"/>
        <dbReference type="ChEBI" id="CHEBI:29991"/>
        <dbReference type="ChEBI" id="CHEBI:32814"/>
        <dbReference type="ChEBI" id="CHEBI:43474"/>
        <dbReference type="ChEBI" id="CHEBI:58228"/>
        <dbReference type="EC" id="2.1.3.2"/>
    </reaction>
</comment>
<comment type="pathway">
    <text evidence="1">Pyrimidine metabolism; UMP biosynthesis via de novo pathway; (S)-dihydroorotate from bicarbonate: step 2/3.</text>
</comment>
<comment type="subunit">
    <text evidence="1">Heterooligomer of catalytic and regulatory chains.</text>
</comment>
<comment type="similarity">
    <text evidence="1">Belongs to the aspartate/ornithine carbamoyltransferase superfamily. ATCase family.</text>
</comment>
<feature type="chain" id="PRO_0000321189" description="Aspartate carbamoyltransferase catalytic subunit">
    <location>
        <begin position="1"/>
        <end position="298"/>
    </location>
</feature>
<feature type="binding site" evidence="1">
    <location>
        <position position="50"/>
    </location>
    <ligand>
        <name>carbamoyl phosphate</name>
        <dbReference type="ChEBI" id="CHEBI:58228"/>
    </ligand>
</feature>
<feature type="binding site" evidence="1">
    <location>
        <position position="51"/>
    </location>
    <ligand>
        <name>carbamoyl phosphate</name>
        <dbReference type="ChEBI" id="CHEBI:58228"/>
    </ligand>
</feature>
<feature type="binding site" evidence="1">
    <location>
        <position position="79"/>
    </location>
    <ligand>
        <name>L-aspartate</name>
        <dbReference type="ChEBI" id="CHEBI:29991"/>
    </ligand>
</feature>
<feature type="binding site" evidence="1">
    <location>
        <position position="100"/>
    </location>
    <ligand>
        <name>carbamoyl phosphate</name>
        <dbReference type="ChEBI" id="CHEBI:58228"/>
    </ligand>
</feature>
<feature type="binding site" evidence="1">
    <location>
        <position position="128"/>
    </location>
    <ligand>
        <name>carbamoyl phosphate</name>
        <dbReference type="ChEBI" id="CHEBI:58228"/>
    </ligand>
</feature>
<feature type="binding site" evidence="1">
    <location>
        <position position="131"/>
    </location>
    <ligand>
        <name>carbamoyl phosphate</name>
        <dbReference type="ChEBI" id="CHEBI:58228"/>
    </ligand>
</feature>
<feature type="binding site" evidence="1">
    <location>
        <position position="160"/>
    </location>
    <ligand>
        <name>L-aspartate</name>
        <dbReference type="ChEBI" id="CHEBI:29991"/>
    </ligand>
</feature>
<feature type="binding site" evidence="1">
    <location>
        <position position="221"/>
    </location>
    <ligand>
        <name>L-aspartate</name>
        <dbReference type="ChEBI" id="CHEBI:29991"/>
    </ligand>
</feature>
<feature type="binding site" evidence="1">
    <location>
        <position position="260"/>
    </location>
    <ligand>
        <name>carbamoyl phosphate</name>
        <dbReference type="ChEBI" id="CHEBI:58228"/>
    </ligand>
</feature>
<feature type="binding site" evidence="1">
    <location>
        <position position="261"/>
    </location>
    <ligand>
        <name>carbamoyl phosphate</name>
        <dbReference type="ChEBI" id="CHEBI:58228"/>
    </ligand>
</feature>
<keyword id="KW-0665">Pyrimidine biosynthesis</keyword>
<keyword id="KW-1185">Reference proteome</keyword>
<keyword id="KW-0808">Transferase</keyword>
<proteinExistence type="inferred from homology"/>
<reference key="1">
    <citation type="journal article" date="2016" name="Stand. Genomic Sci.">
        <title>Complete genome sequence of Methanospirillum hungatei type strain JF1.</title>
        <authorList>
            <person name="Gunsalus R.P."/>
            <person name="Cook L.E."/>
            <person name="Crable B."/>
            <person name="Rohlin L."/>
            <person name="McDonald E."/>
            <person name="Mouttaki H."/>
            <person name="Sieber J.R."/>
            <person name="Poweleit N."/>
            <person name="Zhou H."/>
            <person name="Lapidus A.L."/>
            <person name="Daligault H.E."/>
            <person name="Land M."/>
            <person name="Gilna P."/>
            <person name="Ivanova N."/>
            <person name="Kyrpides N."/>
            <person name="Culley D.E."/>
            <person name="McInerney M.J."/>
        </authorList>
    </citation>
    <scope>NUCLEOTIDE SEQUENCE [LARGE SCALE GENOMIC DNA]</scope>
    <source>
        <strain>ATCC 27890 / DSM 864 / NBRC 100397 / JF-1</strain>
    </source>
</reference>
<dbReference type="EC" id="2.1.3.2" evidence="1"/>
<dbReference type="EMBL" id="CP000254">
    <property type="protein sequence ID" value="ABD40374.1"/>
    <property type="molecule type" value="Genomic_DNA"/>
</dbReference>
<dbReference type="RefSeq" id="WP_011447659.1">
    <property type="nucleotide sequence ID" value="NC_007796.1"/>
</dbReference>
<dbReference type="SMR" id="Q2FN12"/>
<dbReference type="FunCoup" id="Q2FN12">
    <property type="interactions" value="217"/>
</dbReference>
<dbReference type="STRING" id="323259.Mhun_0618"/>
<dbReference type="EnsemblBacteria" id="ABD40374">
    <property type="protein sequence ID" value="ABD40374"/>
    <property type="gene ID" value="Mhun_0618"/>
</dbReference>
<dbReference type="GeneID" id="3922565"/>
<dbReference type="KEGG" id="mhu:Mhun_0618"/>
<dbReference type="eggNOG" id="arCOG00911">
    <property type="taxonomic scope" value="Archaea"/>
</dbReference>
<dbReference type="HOGENOM" id="CLU_043846_1_2_2"/>
<dbReference type="InParanoid" id="Q2FN12"/>
<dbReference type="OrthoDB" id="7792at2157"/>
<dbReference type="UniPathway" id="UPA00070">
    <property type="reaction ID" value="UER00116"/>
</dbReference>
<dbReference type="Proteomes" id="UP000001941">
    <property type="component" value="Chromosome"/>
</dbReference>
<dbReference type="GO" id="GO:0016597">
    <property type="term" value="F:amino acid binding"/>
    <property type="evidence" value="ECO:0007669"/>
    <property type="project" value="InterPro"/>
</dbReference>
<dbReference type="GO" id="GO:0004070">
    <property type="term" value="F:aspartate carbamoyltransferase activity"/>
    <property type="evidence" value="ECO:0007669"/>
    <property type="project" value="UniProtKB-UniRule"/>
</dbReference>
<dbReference type="GO" id="GO:0006207">
    <property type="term" value="P:'de novo' pyrimidine nucleobase biosynthetic process"/>
    <property type="evidence" value="ECO:0007669"/>
    <property type="project" value="InterPro"/>
</dbReference>
<dbReference type="GO" id="GO:0044205">
    <property type="term" value="P:'de novo' UMP biosynthetic process"/>
    <property type="evidence" value="ECO:0007669"/>
    <property type="project" value="UniProtKB-UniRule"/>
</dbReference>
<dbReference type="GO" id="GO:0006520">
    <property type="term" value="P:amino acid metabolic process"/>
    <property type="evidence" value="ECO:0007669"/>
    <property type="project" value="InterPro"/>
</dbReference>
<dbReference type="FunFam" id="3.40.50.1370:FF:000001">
    <property type="entry name" value="Aspartate carbamoyltransferase"/>
    <property type="match status" value="1"/>
</dbReference>
<dbReference type="FunFam" id="3.40.50.1370:FF:000002">
    <property type="entry name" value="Aspartate carbamoyltransferase 2"/>
    <property type="match status" value="1"/>
</dbReference>
<dbReference type="Gene3D" id="3.40.50.1370">
    <property type="entry name" value="Aspartate/ornithine carbamoyltransferase"/>
    <property type="match status" value="2"/>
</dbReference>
<dbReference type="HAMAP" id="MF_00001">
    <property type="entry name" value="Asp_carb_tr"/>
    <property type="match status" value="1"/>
</dbReference>
<dbReference type="InterPro" id="IPR006132">
    <property type="entry name" value="Asp/Orn_carbamoyltranf_P-bd"/>
</dbReference>
<dbReference type="InterPro" id="IPR006130">
    <property type="entry name" value="Asp/Orn_carbamoylTrfase"/>
</dbReference>
<dbReference type="InterPro" id="IPR036901">
    <property type="entry name" value="Asp/Orn_carbamoylTrfase_sf"/>
</dbReference>
<dbReference type="InterPro" id="IPR002082">
    <property type="entry name" value="Asp_carbamoyltransf"/>
</dbReference>
<dbReference type="InterPro" id="IPR006131">
    <property type="entry name" value="Asp_carbamoyltransf_Asp/Orn-bd"/>
</dbReference>
<dbReference type="NCBIfam" id="TIGR00670">
    <property type="entry name" value="asp_carb_tr"/>
    <property type="match status" value="1"/>
</dbReference>
<dbReference type="NCBIfam" id="NF002032">
    <property type="entry name" value="PRK00856.1"/>
    <property type="match status" value="1"/>
</dbReference>
<dbReference type="PANTHER" id="PTHR45753:SF6">
    <property type="entry name" value="ASPARTATE CARBAMOYLTRANSFERASE"/>
    <property type="match status" value="1"/>
</dbReference>
<dbReference type="PANTHER" id="PTHR45753">
    <property type="entry name" value="ORNITHINE CARBAMOYLTRANSFERASE, MITOCHONDRIAL"/>
    <property type="match status" value="1"/>
</dbReference>
<dbReference type="Pfam" id="PF00185">
    <property type="entry name" value="OTCace"/>
    <property type="match status" value="1"/>
</dbReference>
<dbReference type="Pfam" id="PF02729">
    <property type="entry name" value="OTCace_N"/>
    <property type="match status" value="1"/>
</dbReference>
<dbReference type="PRINTS" id="PR00100">
    <property type="entry name" value="AOTCASE"/>
</dbReference>
<dbReference type="PRINTS" id="PR00101">
    <property type="entry name" value="ATCASE"/>
</dbReference>
<dbReference type="SUPFAM" id="SSF53671">
    <property type="entry name" value="Aspartate/ornithine carbamoyltransferase"/>
    <property type="match status" value="1"/>
</dbReference>
<dbReference type="PROSITE" id="PS00097">
    <property type="entry name" value="CARBAMOYLTRANSFERASE"/>
    <property type="match status" value="1"/>
</dbReference>